<sequence>MAEKRTLIAVIADEDTTTGLLLAGIGQITPETQEKNFFVYQEGKTTKEEITDKFNHFTEERDDIAILLINQHIAENIRARVDSFTNAFPAILEIPSKDHPYDPEKDSVLKRVRKLFGE</sequence>
<feature type="initiator methionine" description="Removed" evidence="2">
    <location>
        <position position="1"/>
    </location>
</feature>
<feature type="chain" id="PRO_0000144812" description="V-type proton ATPase subunit F">
    <location>
        <begin position="2"/>
        <end position="118"/>
    </location>
</feature>
<feature type="helix" evidence="14">
    <location>
        <begin position="2"/>
        <end position="4"/>
    </location>
</feature>
<feature type="strand" evidence="13">
    <location>
        <begin position="7"/>
        <end position="13"/>
    </location>
</feature>
<feature type="helix" evidence="13">
    <location>
        <begin position="14"/>
        <end position="22"/>
    </location>
</feature>
<feature type="turn" evidence="13">
    <location>
        <begin position="23"/>
        <end position="26"/>
    </location>
</feature>
<feature type="turn" evidence="13">
    <location>
        <begin position="30"/>
        <end position="32"/>
    </location>
</feature>
<feature type="strand" evidence="13">
    <location>
        <begin position="37"/>
        <end position="40"/>
    </location>
</feature>
<feature type="turn" evidence="13">
    <location>
        <begin position="42"/>
        <end position="44"/>
    </location>
</feature>
<feature type="helix" evidence="13">
    <location>
        <begin position="47"/>
        <end position="59"/>
    </location>
</feature>
<feature type="strand" evidence="13">
    <location>
        <begin position="62"/>
        <end position="69"/>
    </location>
</feature>
<feature type="helix" evidence="13">
    <location>
        <begin position="71"/>
        <end position="76"/>
    </location>
</feature>
<feature type="helix" evidence="13">
    <location>
        <begin position="78"/>
        <end position="82"/>
    </location>
</feature>
<feature type="strand" evidence="13">
    <location>
        <begin position="86"/>
        <end position="93"/>
    </location>
</feature>
<feature type="strand" evidence="15">
    <location>
        <begin position="97"/>
        <end position="99"/>
    </location>
</feature>
<feature type="helix" evidence="15">
    <location>
        <begin position="103"/>
        <end position="105"/>
    </location>
</feature>
<feature type="helix" evidence="15">
    <location>
        <begin position="107"/>
        <end position="114"/>
    </location>
</feature>
<protein>
    <recommendedName>
        <fullName>V-type proton ATPase subunit F</fullName>
        <shortName>V-ATPase subunit F</shortName>
    </recommendedName>
    <alternativeName>
        <fullName>V-ATPase 14 kDa subunit</fullName>
    </alternativeName>
    <alternativeName>
        <fullName>Vacuolar proton pump subunit F</fullName>
    </alternativeName>
</protein>
<accession>P39111</accession>
<accession>D6VUF5</accession>
<proteinExistence type="evidence at protein level"/>
<name>VATF_YEAST</name>
<gene>
    <name evidence="6" type="primary">VMA7</name>
    <name type="ordered locus">YGR020C</name>
</gene>
<keyword id="KW-0002">3D-structure</keyword>
<keyword id="KW-0375">Hydrogen ion transport</keyword>
<keyword id="KW-0406">Ion transport</keyword>
<keyword id="KW-0472">Membrane</keyword>
<keyword id="KW-1185">Reference proteome</keyword>
<keyword id="KW-0813">Transport</keyword>
<keyword id="KW-0926">Vacuole</keyword>
<dbReference type="EMBL" id="U10073">
    <property type="protein sequence ID" value="AAA50753.1"/>
    <property type="molecule type" value="Genomic_DNA"/>
</dbReference>
<dbReference type="EMBL" id="U12786">
    <property type="protein sequence ID" value="AAA53208.1"/>
    <property type="molecule type" value="Genomic_DNA"/>
</dbReference>
<dbReference type="EMBL" id="Z72805">
    <property type="protein sequence ID" value="CAA97003.1"/>
    <property type="molecule type" value="Genomic_DNA"/>
</dbReference>
<dbReference type="EMBL" id="BK006941">
    <property type="protein sequence ID" value="DAA08116.1"/>
    <property type="molecule type" value="Genomic_DNA"/>
</dbReference>
<dbReference type="PIR" id="A55118">
    <property type="entry name" value="A55118"/>
</dbReference>
<dbReference type="RefSeq" id="NP_011534.1">
    <property type="nucleotide sequence ID" value="NM_001181149.1"/>
</dbReference>
<dbReference type="PDB" id="3J9T">
    <property type="method" value="EM"/>
    <property type="resolution" value="6.90 A"/>
    <property type="chains" value="N=1-118"/>
</dbReference>
<dbReference type="PDB" id="3J9U">
    <property type="method" value="EM"/>
    <property type="resolution" value="7.60 A"/>
    <property type="chains" value="N=1-118"/>
</dbReference>
<dbReference type="PDB" id="3J9V">
    <property type="method" value="EM"/>
    <property type="resolution" value="8.30 A"/>
    <property type="chains" value="N=1-118"/>
</dbReference>
<dbReference type="PDB" id="4IX9">
    <property type="method" value="X-ray"/>
    <property type="resolution" value="2.33 A"/>
    <property type="chains" value="A/B/C/D=1-94"/>
</dbReference>
<dbReference type="PDB" id="4RND">
    <property type="method" value="X-ray"/>
    <property type="resolution" value="3.18 A"/>
    <property type="chains" value="B/D=1-118"/>
</dbReference>
<dbReference type="PDB" id="5D80">
    <property type="method" value="X-ray"/>
    <property type="resolution" value="6.20 A"/>
    <property type="chains" value="O/o=1-118"/>
</dbReference>
<dbReference type="PDB" id="5VOX">
    <property type="method" value="EM"/>
    <property type="resolution" value="6.80 A"/>
    <property type="chains" value="N=1-118"/>
</dbReference>
<dbReference type="PDB" id="5VOY">
    <property type="method" value="EM"/>
    <property type="resolution" value="7.90 A"/>
    <property type="chains" value="N=1-118"/>
</dbReference>
<dbReference type="PDB" id="5VOZ">
    <property type="method" value="EM"/>
    <property type="resolution" value="7.60 A"/>
    <property type="chains" value="N=1-118"/>
</dbReference>
<dbReference type="PDB" id="6O7V">
    <property type="method" value="EM"/>
    <property type="resolution" value="6.60 A"/>
    <property type="chains" value="N=1-118"/>
</dbReference>
<dbReference type="PDB" id="6O7W">
    <property type="method" value="EM"/>
    <property type="resolution" value="7.00 A"/>
    <property type="chains" value="N=1-118"/>
</dbReference>
<dbReference type="PDB" id="6O7X">
    <property type="method" value="EM"/>
    <property type="resolution" value="8.70 A"/>
    <property type="chains" value="N=1-118"/>
</dbReference>
<dbReference type="PDB" id="7FDA">
    <property type="method" value="EM"/>
    <property type="resolution" value="4.20 A"/>
    <property type="chains" value="N=1-118"/>
</dbReference>
<dbReference type="PDB" id="7FDB">
    <property type="method" value="EM"/>
    <property type="resolution" value="4.80 A"/>
    <property type="chains" value="N=1-118"/>
</dbReference>
<dbReference type="PDB" id="7FDC">
    <property type="method" value="EM"/>
    <property type="resolution" value="6.60 A"/>
    <property type="chains" value="N=1-118"/>
</dbReference>
<dbReference type="PDB" id="7FDE">
    <property type="method" value="EM"/>
    <property type="resolution" value="3.80 A"/>
    <property type="chains" value="N=1-118"/>
</dbReference>
<dbReference type="PDB" id="7TMM">
    <property type="method" value="EM"/>
    <property type="resolution" value="3.50 A"/>
    <property type="chains" value="N=1-118"/>
</dbReference>
<dbReference type="PDB" id="7TMO">
    <property type="method" value="EM"/>
    <property type="resolution" value="3.30 A"/>
    <property type="chains" value="N=1-118"/>
</dbReference>
<dbReference type="PDB" id="7TMP">
    <property type="method" value="EM"/>
    <property type="resolution" value="3.30 A"/>
    <property type="chains" value="N=1-118"/>
</dbReference>
<dbReference type="PDB" id="7TMQ">
    <property type="method" value="EM"/>
    <property type="resolution" value="3.30 A"/>
    <property type="chains" value="N=1-118"/>
</dbReference>
<dbReference type="PDB" id="7TMR">
    <property type="method" value="EM"/>
    <property type="resolution" value="3.50 A"/>
    <property type="chains" value="N=1-118"/>
</dbReference>
<dbReference type="PDB" id="8EAS">
    <property type="method" value="EM"/>
    <property type="resolution" value="2.60 A"/>
    <property type="chains" value="F=1-118"/>
</dbReference>
<dbReference type="PDB" id="8EAT">
    <property type="method" value="EM"/>
    <property type="resolution" value="3.10 A"/>
    <property type="chains" value="F=1-118"/>
</dbReference>
<dbReference type="PDB" id="9COP">
    <property type="method" value="EM"/>
    <property type="resolution" value="2.70 A"/>
    <property type="chains" value="N=2-118"/>
</dbReference>
<dbReference type="PDBsum" id="3J9T"/>
<dbReference type="PDBsum" id="3J9U"/>
<dbReference type="PDBsum" id="3J9V"/>
<dbReference type="PDBsum" id="4IX9"/>
<dbReference type="PDBsum" id="4RND"/>
<dbReference type="PDBsum" id="5D80"/>
<dbReference type="PDBsum" id="5VOX"/>
<dbReference type="PDBsum" id="5VOY"/>
<dbReference type="PDBsum" id="5VOZ"/>
<dbReference type="PDBsum" id="6O7V"/>
<dbReference type="PDBsum" id="6O7W"/>
<dbReference type="PDBsum" id="6O7X"/>
<dbReference type="PDBsum" id="7FDA"/>
<dbReference type="PDBsum" id="7FDB"/>
<dbReference type="PDBsum" id="7FDC"/>
<dbReference type="PDBsum" id="7FDE"/>
<dbReference type="PDBsum" id="7TMM"/>
<dbReference type="PDBsum" id="7TMO"/>
<dbReference type="PDBsum" id="7TMP"/>
<dbReference type="PDBsum" id="7TMQ"/>
<dbReference type="PDBsum" id="7TMR"/>
<dbReference type="PDBsum" id="8EAS"/>
<dbReference type="PDBsum" id="8EAT"/>
<dbReference type="PDBsum" id="9COP"/>
<dbReference type="EMDB" id="EMD-0646"/>
<dbReference type="EMDB" id="EMD-0647"/>
<dbReference type="EMDB" id="EMD-0648"/>
<dbReference type="EMDB" id="EMD-31538"/>
<dbReference type="EMDB" id="EMD-31539"/>
<dbReference type="EMDB" id="EMD-31540"/>
<dbReference type="EMDB" id="EMD-31541"/>
<dbReference type="EMDB" id="EMD-45788"/>
<dbReference type="EMDB" id="EMD-8724"/>
<dbReference type="EMDB" id="EMD-8725"/>
<dbReference type="EMDB" id="EMD-8726"/>
<dbReference type="SMR" id="P39111"/>
<dbReference type="BioGRID" id="33262">
    <property type="interactions" value="72"/>
</dbReference>
<dbReference type="ComplexPortal" id="CPX-1192">
    <property type="entry name" value="Vacuolar proton translocating ATPase complex, Golgi variant"/>
</dbReference>
<dbReference type="ComplexPortal" id="CPX-1193">
    <property type="entry name" value="Vacuolar proton translocating ATPase complex, vacuole variant"/>
</dbReference>
<dbReference type="DIP" id="DIP-2077N"/>
<dbReference type="FunCoup" id="P39111">
    <property type="interactions" value="910"/>
</dbReference>
<dbReference type="IntAct" id="P39111">
    <property type="interactions" value="27"/>
</dbReference>
<dbReference type="MINT" id="P39111"/>
<dbReference type="STRING" id="4932.YGR020C"/>
<dbReference type="TCDB" id="3.A.2.2.3">
    <property type="family name" value="the h+- or na+-translocating f-type, v-type and a-type atpase (f-atpase) superfamily"/>
</dbReference>
<dbReference type="iPTMnet" id="P39111"/>
<dbReference type="PaxDb" id="4932-YGR020C"/>
<dbReference type="PeptideAtlas" id="P39111"/>
<dbReference type="TopDownProteomics" id="P39111"/>
<dbReference type="EnsemblFungi" id="YGR020C_mRNA">
    <property type="protein sequence ID" value="YGR020C"/>
    <property type="gene ID" value="YGR020C"/>
</dbReference>
<dbReference type="GeneID" id="852903"/>
<dbReference type="KEGG" id="sce:YGR020C"/>
<dbReference type="AGR" id="SGD:S000003252"/>
<dbReference type="SGD" id="S000003252">
    <property type="gene designation" value="VMA7"/>
</dbReference>
<dbReference type="VEuPathDB" id="FungiDB:YGR020C"/>
<dbReference type="eggNOG" id="KOG3432">
    <property type="taxonomic scope" value="Eukaryota"/>
</dbReference>
<dbReference type="GeneTree" id="ENSGT00390000013208"/>
<dbReference type="HOGENOM" id="CLU_135754_0_0_1"/>
<dbReference type="InParanoid" id="P39111"/>
<dbReference type="OMA" id="IIICQHI"/>
<dbReference type="OrthoDB" id="10261947at2759"/>
<dbReference type="BioCyc" id="YEAST:G3O-30746-MONOMER"/>
<dbReference type="Reactome" id="R-SCE-1222556">
    <property type="pathway name" value="ROS and RNS production in phagocytes"/>
</dbReference>
<dbReference type="Reactome" id="R-SCE-77387">
    <property type="pathway name" value="Insulin receptor recycling"/>
</dbReference>
<dbReference type="Reactome" id="R-SCE-917977">
    <property type="pathway name" value="Transferrin endocytosis and recycling"/>
</dbReference>
<dbReference type="Reactome" id="R-SCE-9639288">
    <property type="pathway name" value="Amino acids regulate mTORC1"/>
</dbReference>
<dbReference type="BioGRID-ORCS" id="852903">
    <property type="hits" value="1 hit in 10 CRISPR screens"/>
</dbReference>
<dbReference type="EvolutionaryTrace" id="P39111"/>
<dbReference type="PRO" id="PR:P39111"/>
<dbReference type="Proteomes" id="UP000002311">
    <property type="component" value="Chromosome VII"/>
</dbReference>
<dbReference type="RNAct" id="P39111">
    <property type="molecule type" value="protein"/>
</dbReference>
<dbReference type="GO" id="GO:0000329">
    <property type="term" value="C:fungal-type vacuole membrane"/>
    <property type="evidence" value="ECO:0007005"/>
    <property type="project" value="SGD"/>
</dbReference>
<dbReference type="GO" id="GO:0000139">
    <property type="term" value="C:Golgi membrane"/>
    <property type="evidence" value="ECO:0000303"/>
    <property type="project" value="ComplexPortal"/>
</dbReference>
<dbReference type="GO" id="GO:0016020">
    <property type="term" value="C:membrane"/>
    <property type="evidence" value="ECO:0000318"/>
    <property type="project" value="GO_Central"/>
</dbReference>
<dbReference type="GO" id="GO:0033176">
    <property type="term" value="C:proton-transporting V-type ATPase complex"/>
    <property type="evidence" value="ECO:0000353"/>
    <property type="project" value="ComplexPortal"/>
</dbReference>
<dbReference type="GO" id="GO:0016471">
    <property type="term" value="C:vacuolar proton-transporting V-type ATPase complex"/>
    <property type="evidence" value="ECO:0000353"/>
    <property type="project" value="ComplexPortal"/>
</dbReference>
<dbReference type="GO" id="GO:0000221">
    <property type="term" value="C:vacuolar proton-transporting V-type ATPase, V1 domain"/>
    <property type="evidence" value="ECO:0000314"/>
    <property type="project" value="UniProtKB"/>
</dbReference>
<dbReference type="GO" id="GO:0046961">
    <property type="term" value="F:proton-transporting ATPase activity, rotational mechanism"/>
    <property type="evidence" value="ECO:0000304"/>
    <property type="project" value="SGD"/>
</dbReference>
<dbReference type="GO" id="GO:0048388">
    <property type="term" value="P:endosomal lumen acidification"/>
    <property type="evidence" value="ECO:0000303"/>
    <property type="project" value="ComplexPortal"/>
</dbReference>
<dbReference type="GO" id="GO:0061795">
    <property type="term" value="P:Golgi lumen acidification"/>
    <property type="evidence" value="ECO:0000303"/>
    <property type="project" value="ComplexPortal"/>
</dbReference>
<dbReference type="GO" id="GO:1902600">
    <property type="term" value="P:proton transmembrane transport"/>
    <property type="evidence" value="ECO:0000314"/>
    <property type="project" value="ComplexPortal"/>
</dbReference>
<dbReference type="GO" id="GO:0007035">
    <property type="term" value="P:vacuolar acidification"/>
    <property type="evidence" value="ECO:0000304"/>
    <property type="project" value="SGD"/>
</dbReference>
<dbReference type="FunFam" id="3.40.50.10580:FF:000002">
    <property type="entry name" value="V-type proton ATPase subunit F"/>
    <property type="match status" value="1"/>
</dbReference>
<dbReference type="Gene3D" id="3.40.50.10580">
    <property type="entry name" value="ATPase, V1 complex, subunit F"/>
    <property type="match status" value="1"/>
</dbReference>
<dbReference type="InterPro" id="IPR008218">
    <property type="entry name" value="ATPase_V1-cplx_f_g_su"/>
</dbReference>
<dbReference type="InterPro" id="IPR005772">
    <property type="entry name" value="ATPase_V1-cplx_fsu_euk"/>
</dbReference>
<dbReference type="InterPro" id="IPR036906">
    <property type="entry name" value="ATPase_V1_fsu_sf"/>
</dbReference>
<dbReference type="NCBIfam" id="TIGR01101">
    <property type="entry name" value="V_ATP_synt_F"/>
    <property type="match status" value="1"/>
</dbReference>
<dbReference type="PANTHER" id="PTHR13861:SF2">
    <property type="entry name" value="V-TYPE PROTON ATPASE SUBUNIT F"/>
    <property type="match status" value="1"/>
</dbReference>
<dbReference type="PANTHER" id="PTHR13861">
    <property type="entry name" value="VACUOLAR ATP SYNTHASE SUBUNIT F"/>
    <property type="match status" value="1"/>
</dbReference>
<dbReference type="Pfam" id="PF01990">
    <property type="entry name" value="ATP-synt_F"/>
    <property type="match status" value="1"/>
</dbReference>
<dbReference type="PIRSF" id="PIRSF015945">
    <property type="entry name" value="ATPase_V1_F_euk"/>
    <property type="match status" value="1"/>
</dbReference>
<dbReference type="SUPFAM" id="SSF159468">
    <property type="entry name" value="AtpF-like"/>
    <property type="match status" value="1"/>
</dbReference>
<reference key="1">
    <citation type="journal article" date="1994" name="J. Biol. Chem.">
        <title>The Saccharomyces cerevisiae VMA7 gene encodes a 14-kDa subunit of the vacuolar H(+)-ATPase catalytic sector.</title>
        <authorList>
            <person name="Nelson H."/>
            <person name="Mandiyan S."/>
            <person name="Nelson N."/>
        </authorList>
    </citation>
    <scope>NUCLEOTIDE SEQUENCE [GENOMIC DNA]</scope>
    <scope>FUNCTION</scope>
    <scope>SUBCELLULAR LOCATION</scope>
    <source>
        <strain>ATCC 200060 / W303</strain>
    </source>
</reference>
<reference key="2">
    <citation type="journal article" date="1994" name="J. Biol. Chem.">
        <title>VMA7 encodes a novel 14-kDa subunit of the Saccharomyces cerevisiae vacuolar H(+)-ATPase complex.</title>
        <authorList>
            <person name="Graham L.A."/>
            <person name="Hill K.J."/>
            <person name="Stevens T.H."/>
        </authorList>
    </citation>
    <scope>NUCLEOTIDE SEQUENCE [GENOMIC DNA]</scope>
    <source>
        <strain>Sigma 1278B</strain>
    </source>
</reference>
<reference key="3">
    <citation type="journal article" date="1997" name="Yeast">
        <title>Sequence analysis of 203 kilobases from Saccharomyces cerevisiae chromosome VII.</title>
        <authorList>
            <person name="Rieger M."/>
            <person name="Brueckner M."/>
            <person name="Schaefer M."/>
            <person name="Mueller-Auer S."/>
        </authorList>
    </citation>
    <scope>NUCLEOTIDE SEQUENCE [GENOMIC DNA]</scope>
    <source>
        <strain>ATCC 204508 / S288c</strain>
    </source>
</reference>
<reference key="4">
    <citation type="journal article" date="1997" name="Nature">
        <title>The nucleotide sequence of Saccharomyces cerevisiae chromosome VII.</title>
        <authorList>
            <person name="Tettelin H."/>
            <person name="Agostoni-Carbone M.L."/>
            <person name="Albermann K."/>
            <person name="Albers M."/>
            <person name="Arroyo J."/>
            <person name="Backes U."/>
            <person name="Barreiros T."/>
            <person name="Bertani I."/>
            <person name="Bjourson A.J."/>
            <person name="Brueckner M."/>
            <person name="Bruschi C.V."/>
            <person name="Carignani G."/>
            <person name="Castagnoli L."/>
            <person name="Cerdan E."/>
            <person name="Clemente M.L."/>
            <person name="Coblenz A."/>
            <person name="Coglievina M."/>
            <person name="Coissac E."/>
            <person name="Defoor E."/>
            <person name="Del Bino S."/>
            <person name="Delius H."/>
            <person name="Delneri D."/>
            <person name="de Wergifosse P."/>
            <person name="Dujon B."/>
            <person name="Durand P."/>
            <person name="Entian K.-D."/>
            <person name="Eraso P."/>
            <person name="Escribano V."/>
            <person name="Fabiani L."/>
            <person name="Fartmann B."/>
            <person name="Feroli F."/>
            <person name="Feuermann M."/>
            <person name="Frontali L."/>
            <person name="Garcia-Gonzalez M."/>
            <person name="Garcia-Saez M.I."/>
            <person name="Goffeau A."/>
            <person name="Guerreiro P."/>
            <person name="Hani J."/>
            <person name="Hansen M."/>
            <person name="Hebling U."/>
            <person name="Hernandez K."/>
            <person name="Heumann K."/>
            <person name="Hilger F."/>
            <person name="Hofmann B."/>
            <person name="Indge K.J."/>
            <person name="James C.M."/>
            <person name="Klima R."/>
            <person name="Koetter P."/>
            <person name="Kramer B."/>
            <person name="Kramer W."/>
            <person name="Lauquin G."/>
            <person name="Leuther H."/>
            <person name="Louis E.J."/>
            <person name="Maillier E."/>
            <person name="Marconi A."/>
            <person name="Martegani E."/>
            <person name="Mazon M.J."/>
            <person name="Mazzoni C."/>
            <person name="McReynolds A.D.K."/>
            <person name="Melchioretto P."/>
            <person name="Mewes H.-W."/>
            <person name="Minenkova O."/>
            <person name="Mueller-Auer S."/>
            <person name="Nawrocki A."/>
            <person name="Netter P."/>
            <person name="Neu R."/>
            <person name="Nombela C."/>
            <person name="Oliver S.G."/>
            <person name="Panzeri L."/>
            <person name="Paoluzi S."/>
            <person name="Plevani P."/>
            <person name="Portetelle D."/>
            <person name="Portillo F."/>
            <person name="Potier S."/>
            <person name="Purnelle B."/>
            <person name="Rieger M."/>
            <person name="Riles L."/>
            <person name="Rinaldi T."/>
            <person name="Robben J."/>
            <person name="Rodrigues-Pousada C."/>
            <person name="Rodriguez-Belmonte E."/>
            <person name="Rodriguez-Torres A.M."/>
            <person name="Rose M."/>
            <person name="Ruzzi M."/>
            <person name="Saliola M."/>
            <person name="Sanchez-Perez M."/>
            <person name="Schaefer B."/>
            <person name="Schaefer M."/>
            <person name="Scharfe M."/>
            <person name="Schmidheini T."/>
            <person name="Schreer A."/>
            <person name="Skala J."/>
            <person name="Souciet J.-L."/>
            <person name="Steensma H.Y."/>
            <person name="Talla E."/>
            <person name="Thierry A."/>
            <person name="Vandenbol M."/>
            <person name="van der Aart Q.J.M."/>
            <person name="Van Dyck L."/>
            <person name="Vanoni M."/>
            <person name="Verhasselt P."/>
            <person name="Voet M."/>
            <person name="Volckaert G."/>
            <person name="Wambutt R."/>
            <person name="Watson M.D."/>
            <person name="Weber N."/>
            <person name="Wedler E."/>
            <person name="Wedler H."/>
            <person name="Wipfli P."/>
            <person name="Wolf K."/>
            <person name="Wright L.F."/>
            <person name="Zaccaria P."/>
            <person name="Zimmermann M."/>
            <person name="Zollner A."/>
            <person name="Kleine K."/>
        </authorList>
    </citation>
    <scope>NUCLEOTIDE SEQUENCE [LARGE SCALE GENOMIC DNA]</scope>
    <source>
        <strain>ATCC 204508 / S288c</strain>
    </source>
</reference>
<reference key="5">
    <citation type="journal article" date="2014" name="G3 (Bethesda)">
        <title>The reference genome sequence of Saccharomyces cerevisiae: Then and now.</title>
        <authorList>
            <person name="Engel S.R."/>
            <person name="Dietrich F.S."/>
            <person name="Fisk D.G."/>
            <person name="Binkley G."/>
            <person name="Balakrishnan R."/>
            <person name="Costanzo M.C."/>
            <person name="Dwight S.S."/>
            <person name="Hitz B.C."/>
            <person name="Karra K."/>
            <person name="Nash R.S."/>
            <person name="Weng S."/>
            <person name="Wong E.D."/>
            <person name="Lloyd P."/>
            <person name="Skrzypek M.S."/>
            <person name="Miyasato S.R."/>
            <person name="Simison M."/>
            <person name="Cherry J.M."/>
        </authorList>
    </citation>
    <scope>GENOME REANNOTATION</scope>
    <source>
        <strain>ATCC 204508 / S288c</strain>
    </source>
</reference>
<reference key="6">
    <citation type="journal article" date="2003" name="Nature">
        <title>Global analysis of protein expression in yeast.</title>
        <authorList>
            <person name="Ghaemmaghami S."/>
            <person name="Huh W.-K."/>
            <person name="Bower K."/>
            <person name="Howson R.W."/>
            <person name="Belle A."/>
            <person name="Dephoure N."/>
            <person name="O'Shea E.K."/>
            <person name="Weissman J.S."/>
        </authorList>
    </citation>
    <scope>LEVEL OF PROTEIN EXPRESSION [LARGE SCALE ANALYSIS]</scope>
</reference>
<reference key="7">
    <citation type="journal article" date="2008" name="J. Biol. Chem.">
        <title>Stoichiometry of the peripheral stalk subunits E and G of yeast V1-ATPase determined by mass spectrometry.</title>
        <authorList>
            <person name="Kitagawa N."/>
            <person name="Mazon H."/>
            <person name="Heck A.J.R."/>
            <person name="Wilkens S."/>
        </authorList>
    </citation>
    <scope>IDENTIFICATION IN THE V-ATPASE COMPLEX</scope>
    <scope>MASS SPECTROMETRY</scope>
    <scope>CLEAVAGE OF INITIATOR METHIONINE</scope>
</reference>
<reference evidence="9 10 11" key="8">
    <citation type="journal article" date="2015" name="Nature">
        <title>Electron cryomicroscopy observation of rotational states in a eukaryotic V-ATPase.</title>
        <authorList>
            <person name="Zhao J."/>
            <person name="Benlekbir S."/>
            <person name="Rubinstein J.L."/>
        </authorList>
    </citation>
    <scope>STRUCTURE BY ELECTRON MICROSCOPY (6.90 ANGSTROMS)</scope>
    <scope>IDENTIFICATION IN THE V-ATPASE COMPLEX</scope>
</reference>
<reference evidence="12" key="9">
    <citation type="journal article" date="2016" name="EMBO J.">
        <title>Crystal structure of yeast V1-ATPase in the autoinhibited state.</title>
        <authorList>
            <person name="Oot R.A."/>
            <person name="Kane P.M."/>
            <person name="Berry E.A."/>
            <person name="Wilkens S."/>
        </authorList>
    </citation>
    <scope>X-RAY CRYSTALLOGRAPHY (6.20 ANGSTROMS)</scope>
    <scope>IDENTIFICATION IN THE V-ATPASE COMPLEX</scope>
</reference>
<evidence type="ECO:0000269" key="1">
    <source>
    </source>
</evidence>
<evidence type="ECO:0000269" key="2">
    <source>
    </source>
</evidence>
<evidence type="ECO:0000269" key="3">
    <source>
    </source>
</evidence>
<evidence type="ECO:0000269" key="4">
    <source>
    </source>
</evidence>
<evidence type="ECO:0000269" key="5">
    <source>
    </source>
</evidence>
<evidence type="ECO:0000303" key="6">
    <source>
    </source>
</evidence>
<evidence type="ECO:0000305" key="7"/>
<evidence type="ECO:0000305" key="8">
    <source>
    </source>
</evidence>
<evidence type="ECO:0007744" key="9">
    <source>
        <dbReference type="PDB" id="3J9T"/>
    </source>
</evidence>
<evidence type="ECO:0007744" key="10">
    <source>
        <dbReference type="PDB" id="3J9U"/>
    </source>
</evidence>
<evidence type="ECO:0007744" key="11">
    <source>
        <dbReference type="PDB" id="3J9V"/>
    </source>
</evidence>
<evidence type="ECO:0007744" key="12">
    <source>
        <dbReference type="PDB" id="5D80"/>
    </source>
</evidence>
<evidence type="ECO:0007829" key="13">
    <source>
        <dbReference type="PDB" id="4IX9"/>
    </source>
</evidence>
<evidence type="ECO:0007829" key="14">
    <source>
        <dbReference type="PDB" id="4RND"/>
    </source>
</evidence>
<evidence type="ECO:0007829" key="15">
    <source>
        <dbReference type="PDB" id="8EAS"/>
    </source>
</evidence>
<comment type="function">
    <text evidence="5">Subunit of the V1 complex of vacuolar(H+)-ATPase (V-ATPase), a multisubunit enzyme composed of a peripheral complex (V1) that hydrolyzes ATP and a membrane integral complex (V0) that translocates protons (PubMed:7929071). V-ATPase is responsible for acidifying and maintaining the pH of intracellular compartments (PubMed:7929071).</text>
</comment>
<comment type="subunit">
    <text evidence="2 3 4 5">V-ATPase is a heteromultimeric enzyme composed of a peripheral catalytic V1 complex (components A to H) attached to an integral membrane V0 proton pore complex (components: a, c, c', c'', d, e, f and VOA1).</text>
</comment>
<comment type="interaction">
    <interactant intactId="EBI-20272">
        <id>P39111</id>
    </interactant>
    <interactant intactId="EBI-20281">
        <id>P41807</id>
        <label>VMA13</label>
    </interactant>
    <organismsDiffer>false</organismsDiffer>
    <experiments>4</experiments>
</comment>
<comment type="interaction">
    <interactant intactId="EBI-20272">
        <id>P39111</id>
    </interactant>
    <interactant intactId="EBI-20201">
        <id>P32366</id>
        <label>VMA6</label>
    </interactant>
    <organismsDiffer>false</organismsDiffer>
    <experiments>8</experiments>
</comment>
<comment type="interaction">
    <interactant intactId="EBI-20272">
        <id>P39111</id>
    </interactant>
    <interactant intactId="EBI-20264">
        <id>P32610</id>
        <label>VMA8</label>
    </interactant>
    <organismsDiffer>false</organismsDiffer>
    <experiments>4</experiments>
</comment>
<comment type="interaction">
    <interactant intactId="EBI-20272">
        <id>P39111</id>
    </interactant>
    <interactant intactId="EBI-20455">
        <id>P32563</id>
        <label>VPH1</label>
    </interactant>
    <organismsDiffer>false</organismsDiffer>
    <experiments>6</experiments>
</comment>
<comment type="subcellular location">
    <subcellularLocation>
        <location evidence="8">Vacuole membrane</location>
        <topology evidence="7">Peripheral membrane protein</topology>
        <orientation evidence="7">Cytoplasmic side</orientation>
    </subcellularLocation>
</comment>
<comment type="mass spectrometry"/>
<comment type="miscellaneous">
    <text evidence="1">Present with 4050 molecules/cell in log phase SD medium.</text>
</comment>
<comment type="similarity">
    <text evidence="7">Belongs to the V-ATPase F subunit family.</text>
</comment>
<organism>
    <name type="scientific">Saccharomyces cerevisiae (strain ATCC 204508 / S288c)</name>
    <name type="common">Baker's yeast</name>
    <dbReference type="NCBI Taxonomy" id="559292"/>
    <lineage>
        <taxon>Eukaryota</taxon>
        <taxon>Fungi</taxon>
        <taxon>Dikarya</taxon>
        <taxon>Ascomycota</taxon>
        <taxon>Saccharomycotina</taxon>
        <taxon>Saccharomycetes</taxon>
        <taxon>Saccharomycetales</taxon>
        <taxon>Saccharomycetaceae</taxon>
        <taxon>Saccharomyces</taxon>
    </lineage>
</organism>